<feature type="chain" id="PRO_0000222429" description="Readthrough protein P3-RTD">
    <location>
        <begin position="1"/>
        <end position="716"/>
    </location>
</feature>
<feature type="chain" id="PRO_0000455345" description="Minor capsid readthrough protein">
    <location>
        <begin position="1"/>
        <end position="443" status="uncertain"/>
    </location>
</feature>
<feature type="chain" id="PRO_0000455346" description="Cleaved product">
    <location>
        <begin position="444" status="uncertain"/>
        <end position="716"/>
    </location>
</feature>
<feature type="region of interest" description="Disordered" evidence="3">
    <location>
        <begin position="1"/>
        <end position="68"/>
    </location>
</feature>
<feature type="region of interest" description="Disordered" evidence="3">
    <location>
        <begin position="207"/>
        <end position="228"/>
    </location>
</feature>
<feature type="region of interest" description="Readthrough domain (RTD)">
    <location>
        <begin position="210"/>
        <end position="716"/>
    </location>
</feature>
<feature type="region of interest" description="Disordered" evidence="3">
    <location>
        <begin position="438"/>
        <end position="547"/>
    </location>
</feature>
<feature type="region of interest" description="Disordered" evidence="3">
    <location>
        <begin position="630"/>
        <end position="655"/>
    </location>
</feature>
<feature type="region of interest" description="Involved in the efficient long distance movement of the virus and the periplasmic subcellular location" evidence="8">
    <location>
        <begin position="694"/>
        <end position="698"/>
    </location>
</feature>
<feature type="compositionally biased region" description="Low complexity" evidence="3">
    <location>
        <begin position="1"/>
        <end position="17"/>
    </location>
</feature>
<feature type="compositionally biased region" description="Basic residues" evidence="3">
    <location>
        <begin position="18"/>
        <end position="30"/>
    </location>
</feature>
<feature type="compositionally biased region" description="Basic residues" evidence="3">
    <location>
        <begin position="44"/>
        <end position="61"/>
    </location>
</feature>
<feature type="compositionally biased region" description="Pro residues" evidence="3">
    <location>
        <begin position="216"/>
        <end position="226"/>
    </location>
</feature>
<feature type="compositionally biased region" description="Basic and acidic residues" evidence="3">
    <location>
        <begin position="459"/>
        <end position="474"/>
    </location>
</feature>
<feature type="compositionally biased region" description="Polar residues" evidence="3">
    <location>
        <begin position="475"/>
        <end position="502"/>
    </location>
</feature>
<feature type="compositionally biased region" description="Low complexity" evidence="3">
    <location>
        <begin position="645"/>
        <end position="655"/>
    </location>
</feature>
<feature type="site" description="Cleavage" evidence="1">
    <location>
        <begin position="443"/>
        <end position="444"/>
    </location>
</feature>
<feature type="splice variant" id="VSP_038673" description="In isoform P7." evidence="11">
    <location>
        <begin position="1"/>
        <end position="591"/>
    </location>
</feature>
<dbReference type="EMBL" id="D00530">
    <property type="protein sequence ID" value="BAA00421.1"/>
    <property type="status" value="ALT_SEQ"/>
    <property type="molecule type" value="Genomic_RNA"/>
</dbReference>
<dbReference type="PIR" id="JA0122">
    <property type="entry name" value="WMVQ53"/>
</dbReference>
<dbReference type="PIR" id="S24594">
    <property type="entry name" value="S24594"/>
</dbReference>
<dbReference type="SMR" id="P17525"/>
<dbReference type="Proteomes" id="UP000006723">
    <property type="component" value="Segment"/>
</dbReference>
<dbReference type="GO" id="GO:0044229">
    <property type="term" value="C:host cell periplasmic space"/>
    <property type="evidence" value="ECO:0007669"/>
    <property type="project" value="UniProtKB-SubCell"/>
</dbReference>
<dbReference type="GO" id="GO:0044219">
    <property type="term" value="C:host cell plasmodesma"/>
    <property type="evidence" value="ECO:0007669"/>
    <property type="project" value="UniProtKB-SubCell"/>
</dbReference>
<dbReference type="GO" id="GO:0019028">
    <property type="term" value="C:viral capsid"/>
    <property type="evidence" value="ECO:0007669"/>
    <property type="project" value="UniProtKB-KW"/>
</dbReference>
<dbReference type="GO" id="GO:0005198">
    <property type="term" value="F:structural molecule activity"/>
    <property type="evidence" value="ECO:0007669"/>
    <property type="project" value="InterPro"/>
</dbReference>
<dbReference type="Gene3D" id="2.60.120.20">
    <property type="match status" value="1"/>
</dbReference>
<dbReference type="InterPro" id="IPR001517">
    <property type="entry name" value="Luteo_coat"/>
</dbReference>
<dbReference type="InterPro" id="IPR002929">
    <property type="entry name" value="PLrV_ORF5"/>
</dbReference>
<dbReference type="InterPro" id="IPR029053">
    <property type="entry name" value="Viral_coat"/>
</dbReference>
<dbReference type="Pfam" id="PF00894">
    <property type="entry name" value="Luteo_coat"/>
    <property type="match status" value="1"/>
</dbReference>
<dbReference type="Pfam" id="PF01690">
    <property type="entry name" value="PLRV_ORF5"/>
    <property type="match status" value="1"/>
</dbReference>
<dbReference type="PRINTS" id="PR00910">
    <property type="entry name" value="LVIRUSORF6"/>
</dbReference>
<organismHost>
    <name type="scientific">Solanum tuberosum</name>
    <name type="common">Potato</name>
    <dbReference type="NCBI Taxonomy" id="4113"/>
</organismHost>
<sequence>MSTVVVKGNVNGGVQQPRMRRRQSLRRRANRVQPVVMVTAPGQPRRRRRRRGGNRRSRRTGVPRGRGSSETFVFTKDNLVGNTQGSFTFGPSLSDCPAFKDGILKAYHEYKITSILLQFVSEASSTSSGSIAYELDPHCKVSSLQSYVNKFQITKGGAKTYQARMINGVEWHDSSEDQCRILWKGNGKSSDSAGSFRVTIKVALQNPKYDSGSEPSPSPQPTPTPTPQKHERFIAYVGIPMLTIQARENDDQIILGSLGSQRMKYIEDENQNYTKFSSEYYSQSSMQAVPMYYFNVPKGQWSVDISCEGYQPTSSTSDPNRGRSDGMIAYSNADSDYWNVGEADGVKISKLRNDNTYRQGHPELEINSCHFREGQLLERDATISFHVEAPTDGRFFLVGPAIQKTAKYNYTISYGDWTDRDMELGLITVVLDEHLEGTGSANRVRRPPREGHTYMASPHEPEGKPVGNKPRDETPIQTQERQPDQTPSDDVSDAGSVNSGGPTESLRLEFGVNSDSTYDATVDGTDWPRIPPPRHPPEPRVSGNSRTVTDFSSKADLLENWDAEHFDPGYSKEDVAAATIIAHGSIQDGRSMLEKREENVKNKTSSWKPPSLKAVSPAIAKLRSIRKSQPLEGGTLNKDATDGVSSIGSGSLTGGTLKRKATIEERLLQTLTTEQRLWYENFKKTNPPAATQWLFEYQPPPQVDRNIAEKPFQGRK</sequence>
<comment type="function">
    <molecule>Minor capsid readthrough protein</molecule>
    <text evidence="1 2 4 12">Minor component of the viral capsid involved in aphid transmission and virus accumulation in the host (Probable). Required for the virus to move through the aphid (By similarity). The RTD domain of the protein is exposed on the surface of the particle and determines the vector specificity and intestinal tropism in the aphid (By similarity). This domain might also determine the limitation of the virus to the host phloem (PubMed:19297484).</text>
</comment>
<comment type="function">
    <molecule>Isoform P7</molecule>
    <text evidence="9">Participates, together with the proteins P0 and P1, in the inhibition of the induction of aphid-induced host phytohormones (PubMed:31758809). This could play a role in the attraction to the infected plants by aphids (PubMed:31758809).</text>
</comment>
<comment type="subcellular location">
    <molecule>Minor capsid readthrough protein</molecule>
    <subcellularLocation>
        <location evidence="13">Virion</location>
    </subcellularLocation>
    <subcellularLocation>
        <location evidence="14">Host cell junction</location>
        <location evidence="14">Host plasmodesma</location>
    </subcellularLocation>
    <subcellularLocation>
        <location evidence="14">Host periplasm</location>
    </subcellularLocation>
</comment>
<comment type="subcellular location">
    <molecule>Cleaved product</molecule>
    <subcellularLocation>
        <location evidence="15">Virion</location>
    </subcellularLocation>
</comment>
<comment type="alternative products">
    <event type="alternative promoter"/>
    <isoform>
        <id>P17525-1</id>
        <name>Readthrough protein P3-RTD</name>
        <sequence type="displayed"/>
    </isoform>
    <isoform>
        <id>P17525-2</id>
        <name>P7</name>
        <name>ORF7 protein</name>
        <sequence type="described" ref="VSP_038673"/>
    </isoform>
    <text evidence="6">P7 is the translated product of subgenomic RNA sgRNA3.</text>
</comment>
<comment type="domain">
    <molecule>Isoform Readthrough protein P3-RTD</molecule>
    <text evidence="1 2 11">The N-terminus is highly basic like those of many plant virus capsid proteins. It has been suggested that these regions may be involved in protein-RNA interaction (Probable). The RTD N-terminus is responsible for aphid transmission and aphid endosymbiont interaction (By similarity). The readthrough domain is required for transport of virus through membranes of the aphid salivary glands (By similarity).</text>
</comment>
<comment type="PTM">
    <molecule>Isoform Readthrough protein P3-RTD</molecule>
    <text evidence="5 10">In virus particles, more than 200 amino acids are proteolytically cleaved releasing the C-terminus part of the RTD domain (PubMed:2230732, PubMed:7513925). The cleaved product remains attached to the virus particle (PubMed:7513925).</text>
</comment>
<comment type="miscellaneous">
    <molecule>Isoform Readthrough protein P3-RTD</molecule>
    <text evidence="5 7">This protein is translated as a fusion protein by episodic readthrough of the major coat protein termination codon. It is composed of the major capsid protein fused to a long C-terminal extension called the readthrough domain (RTD). Readthrough of the terminator codon TAG occurs between the codons for 208-Lys and 210-Val.</text>
</comment>
<comment type="similarity">
    <text evidence="11">Belongs to the luteoviruses readthrough protein family.</text>
</comment>
<comment type="sequence caution" evidence="11">
    <conflict type="erroneous gene model prediction">
        <sequence resource="EMBL-CDS" id="BAA00421"/>
    </conflict>
</comment>
<protein>
    <recommendedName>
        <fullName>Readthrough protein P3-RTD</fullName>
    </recommendedName>
    <alternativeName>
        <fullName>P3-P5 readthrough protein</fullName>
    </alternativeName>
    <alternativeName>
        <fullName>P74</fullName>
    </alternativeName>
    <alternativeName>
        <fullName>Readthrough protein</fullName>
        <shortName>RT protein</shortName>
    </alternativeName>
    <component>
        <recommendedName>
            <fullName evidence="1">Minor capsid readthrough protein</fullName>
            <shortName evidence="1">Minor capsid RT protein</shortName>
        </recommendedName>
        <alternativeName>
            <fullName>54 kDa protein</fullName>
        </alternativeName>
    </component>
    <component>
        <recommendedName>
            <fullName evidence="11">Cleaved product</fullName>
        </recommendedName>
    </component>
</protein>
<organism>
    <name type="scientific">Potato leafroll virus (strain Potato/Scotland/strain 1/1984)</name>
    <name type="common">PLrV</name>
    <dbReference type="NCBI Taxonomy" id="12046"/>
    <lineage>
        <taxon>Viruses</taxon>
        <taxon>Riboviria</taxon>
        <taxon>Orthornavirae</taxon>
        <taxon>Pisuviricota</taxon>
        <taxon>Pisoniviricetes</taxon>
        <taxon>Sobelivirales</taxon>
        <taxon>Solemoviridae</taxon>
        <taxon>Polerovirus</taxon>
        <taxon>Potato leafroll virus</taxon>
    </lineage>
</organism>
<reference key="1">
    <citation type="journal article" date="1989" name="J. Gen. Virol.">
        <title>Nucleotide sequence of potato leafroll luteovirus RNA.</title>
        <authorList>
            <person name="Mayo M.A."/>
            <person name="Robinson D.J."/>
            <person name="Jolly C.A."/>
            <person name="Hyman L."/>
        </authorList>
    </citation>
    <scope>NUCLEOTIDE SEQUENCE [GENOMIC RNA]</scope>
</reference>
<reference key="2">
    <citation type="journal article" date="1990" name="J. Gen. Virol.">
        <title>Expression of the genome of potato leafroll virus: readthrough of the coat protein termination codon in vivo.</title>
        <authorList>
            <person name="Bahner I."/>
            <person name="Lamb J."/>
            <person name="Mayo M.A."/>
            <person name="Hay R.T."/>
        </authorList>
    </citation>
    <scope>SUBCELLULAR LOCATION (MINOR CAPSID READTHROUGH PROTEIN)</scope>
    <scope>READTHROUGH (ISOFORM READTHROUGH PROTEIN P3-RTD)</scope>
    <scope>PROTEOLYTIC CLEAVAGE (ISOFORM READTHROUGH PROTEIN P3-RTD)</scope>
</reference>
<reference key="3">
    <citation type="journal article" date="1994" name="Virology">
        <title>Changes in the amino acid sequence of the coat protein readthrough domain of potato leafroll luteovirus affect the formation of an epitope and aphid transmission.</title>
        <authorList>
            <person name="Jolly C.A."/>
            <person name="Mayo M.A."/>
        </authorList>
    </citation>
    <scope>PROTEOLYTIC CLEAVAGE (ISOFORM READTHROUGH PROTEIN P3-RTD)</scope>
    <scope>SUBCELLULAR LOCATION (P7)</scope>
</reference>
<reference key="4">
    <citation type="journal article" date="2008" name="J. Gen. Virol.">
        <title>Small deletions in the potato leafroll virus readthrough protein affect particle morphology, aphid transmission, virus movement and accumulation.</title>
        <authorList>
            <person name="Peter K.A."/>
            <person name="Liang D."/>
            <person name="Palukaitis P."/>
            <person name="Gray S.M."/>
        </authorList>
    </citation>
    <scope>FUNCTION (MINOR CAPSID READTHROUGH PROTEIN)</scope>
</reference>
<reference key="5">
    <citation type="journal article" date="2009" name="J. Virol.">
        <title>The C terminus of the polerovirus p5 readthrough domain limits virus infection to the phloem.</title>
        <authorList>
            <person name="Peter K.A."/>
            <person name="Gildow F."/>
            <person name="Palukaitis P."/>
            <person name="Gray S.M."/>
        </authorList>
    </citation>
    <scope>FUNCTION (MINOR CAPSID READTHROUGH PROTEIN)</scope>
</reference>
<reference key="6">
    <citation type="journal article" date="2013" name="Virology">
        <title>Small RNA sequencing of Potato leafroll virus-infected plants reveals an additional subgenomic RNA encoding a sequence-specific RNA-binding protein.</title>
        <authorList>
            <person name="Hwang Y.T."/>
            <person name="Kalischuk M."/>
            <person name="Fusaro A.F."/>
            <person name="Waterhouse P.M."/>
            <person name="Kawchuk L."/>
        </authorList>
    </citation>
    <scope>ALTERNATIVE PROMOTER USAGE</scope>
</reference>
<reference key="7">
    <citation type="journal article" date="2018" name="J. Virol.">
        <title>A Stem-Loop Structure in Potato Leafroll Virus Open Reading Frame 5 (ORF5) Is Essential for Readthrough Translation of the Coat Protein ORF Stop Codon 700 Bases Upstream.</title>
        <authorList>
            <person name="Xu Y."/>
            <person name="Ju H.J."/>
            <person name="DeBlasio S."/>
            <person name="Carino E.J."/>
            <person name="Johnson R."/>
            <person name="MacCoss M.J."/>
            <person name="Heck M."/>
            <person name="Miller W.A."/>
            <person name="Gray S.M."/>
        </authorList>
    </citation>
    <scope>READTHROUGH (ISOFORM READTHROUGH PROTEIN P3-RTD)</scope>
</reference>
<reference key="8">
    <citation type="journal article" date="2018" name="PLoS Pathog.">
        <title>An aromatic amino acid and associated helix in the C-terminus of the potato leafroll virus minor capsid protein regulate systemic infection and symptom expression.</title>
        <authorList>
            <person name="Xu Y."/>
            <person name="Da Silva W.L."/>
            <person name="Qian Y."/>
            <person name="Gray S.M."/>
        </authorList>
    </citation>
    <scope>SUBCELLULAR LOCATION (MINOR CAPSID READTHROUGH PROTEIN)</scope>
</reference>
<reference key="9">
    <citation type="journal article" date="2020" name="Plant Cell Environ.">
        <title>A polerovirus, Potato leafroll virus, alters plant-vector interactions using three viral proteins.</title>
        <authorList>
            <person name="Patton M.F."/>
            <person name="Bak A."/>
            <person name="Sayre J.M."/>
            <person name="Heck M.L."/>
            <person name="Casteel C.L."/>
        </authorList>
    </citation>
    <scope>FUNCTION (ISOFORM P7)</scope>
</reference>
<keyword id="KW-0877">Alternative promoter usage</keyword>
<keyword id="KW-0167">Capsid protein</keyword>
<keyword id="KW-1031">Host cell junction</keyword>
<keyword id="KW-1049">Host periplasm</keyword>
<keyword id="KW-1185">Reference proteome</keyword>
<keyword id="KW-1159">RNA suppression of termination</keyword>
<keyword id="KW-0946">Virion</keyword>
<accession>P17525</accession>
<accession>Q84813</accession>
<accession>Q84829</accession>
<gene>
    <name type="ORF">ORF3/ORF5</name>
</gene>
<evidence type="ECO:0000250" key="1">
    <source>
        <dbReference type="UniProtKB" id="P09514"/>
    </source>
</evidence>
<evidence type="ECO:0000250" key="2">
    <source>
        <dbReference type="UniProtKB" id="P09516"/>
    </source>
</evidence>
<evidence type="ECO:0000256" key="3">
    <source>
        <dbReference type="SAM" id="MobiDB-lite"/>
    </source>
</evidence>
<evidence type="ECO:0000269" key="4">
    <source>
    </source>
</evidence>
<evidence type="ECO:0000269" key="5">
    <source>
    </source>
</evidence>
<evidence type="ECO:0000269" key="6">
    <source>
    </source>
</evidence>
<evidence type="ECO:0000269" key="7">
    <source>
    </source>
</evidence>
<evidence type="ECO:0000269" key="8">
    <source>
    </source>
</evidence>
<evidence type="ECO:0000269" key="9">
    <source>
    </source>
</evidence>
<evidence type="ECO:0000269" key="10">
    <source>
    </source>
</evidence>
<evidence type="ECO:0000305" key="11"/>
<evidence type="ECO:0000305" key="12">
    <source>
    </source>
</evidence>
<evidence type="ECO:0000305" key="13">
    <source>
    </source>
</evidence>
<evidence type="ECO:0000305" key="14">
    <source>
    </source>
</evidence>
<evidence type="ECO:0000305" key="15">
    <source>
    </source>
</evidence>
<name>MCAPS_PLRV1</name>
<proteinExistence type="evidence at protein level"/>